<organism>
    <name type="scientific">Parasynechococcus marenigrum (strain WH8102)</name>
    <dbReference type="NCBI Taxonomy" id="84588"/>
    <lineage>
        <taxon>Bacteria</taxon>
        <taxon>Bacillati</taxon>
        <taxon>Cyanobacteriota</taxon>
        <taxon>Cyanophyceae</taxon>
        <taxon>Synechococcales</taxon>
        <taxon>Prochlorococcaceae</taxon>
        <taxon>Parasynechococcus</taxon>
        <taxon>Parasynechococcus marenigrum</taxon>
    </lineage>
</organism>
<keyword id="KW-0113">Calvin cycle</keyword>
<keyword id="KW-0119">Carbohydrate metabolism</keyword>
<keyword id="KW-0378">Hydrolase</keyword>
<keyword id="KW-0464">Manganese</keyword>
<keyword id="KW-0479">Metal-binding</keyword>
<name>FBSB_PARMW</name>
<gene>
    <name type="ordered locus">SYNW1116</name>
</gene>
<feature type="chain" id="PRO_0000342734" description="D-fructose 1,6-bisphosphatase class 2/sedoheptulose 1,7-bisphosphatase">
    <location>
        <begin position="1"/>
        <end position="334"/>
    </location>
</feature>
<feature type="binding site" evidence="1">
    <location>
        <position position="33"/>
    </location>
    <ligand>
        <name>Mn(2+)</name>
        <dbReference type="ChEBI" id="CHEBI:29035"/>
        <label>1</label>
    </ligand>
</feature>
<feature type="binding site" evidence="1">
    <location>
        <position position="57"/>
    </location>
    <ligand>
        <name>Mn(2+)</name>
        <dbReference type="ChEBI" id="CHEBI:29035"/>
        <label>1</label>
    </ligand>
</feature>
<feature type="binding site" evidence="1">
    <location>
        <position position="85"/>
    </location>
    <ligand>
        <name>Mn(2+)</name>
        <dbReference type="ChEBI" id="CHEBI:29035"/>
        <label>2</label>
    </ligand>
</feature>
<feature type="binding site" evidence="1">
    <location>
        <begin position="88"/>
        <end position="90"/>
    </location>
    <ligand>
        <name>substrate</name>
    </ligand>
</feature>
<feature type="binding site" evidence="1">
    <location>
        <position position="88"/>
    </location>
    <ligand>
        <name>Mn(2+)</name>
        <dbReference type="ChEBI" id="CHEBI:29035"/>
        <label>2</label>
    </ligand>
</feature>
<feature type="binding site" evidence="1">
    <location>
        <position position="119"/>
    </location>
    <ligand>
        <name>substrate</name>
    </ligand>
</feature>
<feature type="binding site" evidence="1">
    <location>
        <begin position="164"/>
        <end position="166"/>
    </location>
    <ligand>
        <name>substrate</name>
    </ligand>
</feature>
<feature type="binding site" evidence="1">
    <location>
        <begin position="186"/>
        <end position="188"/>
    </location>
    <ligand>
        <name>substrate</name>
    </ligand>
</feature>
<feature type="binding site" evidence="1">
    <location>
        <position position="213"/>
    </location>
    <ligand>
        <name>Mn(2+)</name>
        <dbReference type="ChEBI" id="CHEBI:29035"/>
        <label>2</label>
    </ligand>
</feature>
<comment type="function">
    <text evidence="1">Catalyzes the hydrolysis of fructose 1,6-bisphosphate (Fru 1,6-P2) and sedoheptulose 1,7-bisphosphate (Sed 1,7-P2) to fructose 6-phosphate and sedoheptulose 7-phosphate, respectively.</text>
</comment>
<comment type="catalytic activity">
    <reaction>
        <text>beta-D-fructose 1,6-bisphosphate + H2O = beta-D-fructose 6-phosphate + phosphate</text>
        <dbReference type="Rhea" id="RHEA:11064"/>
        <dbReference type="ChEBI" id="CHEBI:15377"/>
        <dbReference type="ChEBI" id="CHEBI:32966"/>
        <dbReference type="ChEBI" id="CHEBI:43474"/>
        <dbReference type="ChEBI" id="CHEBI:57634"/>
        <dbReference type="EC" id="3.1.3.11"/>
    </reaction>
</comment>
<comment type="catalytic activity">
    <reaction>
        <text>D-sedoheptulose 1,7-bisphosphate + H2O = D-sedoheptulose 7-phosphate + phosphate</text>
        <dbReference type="Rhea" id="RHEA:17461"/>
        <dbReference type="ChEBI" id="CHEBI:15377"/>
        <dbReference type="ChEBI" id="CHEBI:43474"/>
        <dbReference type="ChEBI" id="CHEBI:57483"/>
        <dbReference type="ChEBI" id="CHEBI:58335"/>
        <dbReference type="EC" id="3.1.3.37"/>
    </reaction>
</comment>
<comment type="cofactor">
    <cofactor evidence="1">
        <name>Mn(2+)</name>
        <dbReference type="ChEBI" id="CHEBI:29035"/>
    </cofactor>
</comment>
<comment type="pathway">
    <text>Carbohydrate biosynthesis; Calvin cycle.</text>
</comment>
<comment type="subunit">
    <text evidence="1">Homotetramer.</text>
</comment>
<comment type="similarity">
    <text evidence="2">Belongs to the FBPase class 2 family.</text>
</comment>
<protein>
    <recommendedName>
        <fullName>D-fructose 1,6-bisphosphatase class 2/sedoheptulose 1,7-bisphosphatase</fullName>
        <shortName>FBPase class 2/SBPase</shortName>
        <ecNumber>3.1.3.11</ecNumber>
        <ecNumber>3.1.3.37</ecNumber>
    </recommendedName>
</protein>
<sequence>MDQTLIQEILEVVEQAAIASAKLSGKGLKNEADAAAVEAMRKRMGQIQMQGRIVIGEGERDEAPMLYIGEEVGSGTGPGVDFAVDPCEGTNLCAFNQRGSMAVLAASDRGGLFNAPDFYMKKLAAPPAAKGKVDIRKSATENIKILSECLGLAVDELTIVVMDRARHKDLIAEIRATGARIQPISDGDVQAAIACGFAGTGTHCLMGIGAAPEGVISAAAMRALGGHFQGQLVYDPAVAQTSEWADMTKEGNLARLAEMGITDPDKVYEAEELACGEHVCFAGSGITDGLLFHGVKFERDCTRTSSLVISNLDNTCRFTNTVHIKDGAQSIALS</sequence>
<reference key="1">
    <citation type="journal article" date="2003" name="Nature">
        <title>The genome of a motile marine Synechococcus.</title>
        <authorList>
            <person name="Palenik B."/>
            <person name="Brahamsha B."/>
            <person name="Larimer F.W."/>
            <person name="Land M.L."/>
            <person name="Hauser L."/>
            <person name="Chain P."/>
            <person name="Lamerdin J.E."/>
            <person name="Regala W."/>
            <person name="Allen E.E."/>
            <person name="McCarren J."/>
            <person name="Paulsen I.T."/>
            <person name="Dufresne A."/>
            <person name="Partensky F."/>
            <person name="Webb E.A."/>
            <person name="Waterbury J."/>
        </authorList>
    </citation>
    <scope>NUCLEOTIDE SEQUENCE [LARGE SCALE GENOMIC DNA]</scope>
    <source>
        <strain>WH8102</strain>
    </source>
</reference>
<proteinExistence type="inferred from homology"/>
<evidence type="ECO:0000250" key="1"/>
<evidence type="ECO:0000305" key="2"/>
<accession>Q7U770</accession>
<dbReference type="EC" id="3.1.3.11"/>
<dbReference type="EC" id="3.1.3.37"/>
<dbReference type="EMBL" id="BX569692">
    <property type="protein sequence ID" value="CAE07631.1"/>
    <property type="molecule type" value="Genomic_DNA"/>
</dbReference>
<dbReference type="RefSeq" id="WP_011127981.1">
    <property type="nucleotide sequence ID" value="NC_005070.1"/>
</dbReference>
<dbReference type="SMR" id="Q7U770"/>
<dbReference type="STRING" id="84588.SYNW1116"/>
<dbReference type="KEGG" id="syw:SYNW1116"/>
<dbReference type="eggNOG" id="COG1494">
    <property type="taxonomic scope" value="Bacteria"/>
</dbReference>
<dbReference type="HOGENOM" id="CLU_054938_0_0_3"/>
<dbReference type="UniPathway" id="UPA00116"/>
<dbReference type="Proteomes" id="UP000001422">
    <property type="component" value="Chromosome"/>
</dbReference>
<dbReference type="GO" id="GO:0005829">
    <property type="term" value="C:cytosol"/>
    <property type="evidence" value="ECO:0007669"/>
    <property type="project" value="TreeGrafter"/>
</dbReference>
<dbReference type="GO" id="GO:0042132">
    <property type="term" value="F:fructose 1,6-bisphosphate 1-phosphatase activity"/>
    <property type="evidence" value="ECO:0007669"/>
    <property type="project" value="UniProtKB-EC"/>
</dbReference>
<dbReference type="GO" id="GO:0046872">
    <property type="term" value="F:metal ion binding"/>
    <property type="evidence" value="ECO:0007669"/>
    <property type="project" value="UniProtKB-KW"/>
</dbReference>
<dbReference type="GO" id="GO:0050278">
    <property type="term" value="F:sedoheptulose-bisphosphatase activity"/>
    <property type="evidence" value="ECO:0007669"/>
    <property type="project" value="UniProtKB-EC"/>
</dbReference>
<dbReference type="GO" id="GO:0030388">
    <property type="term" value="P:fructose 1,6-bisphosphate metabolic process"/>
    <property type="evidence" value="ECO:0007669"/>
    <property type="project" value="TreeGrafter"/>
</dbReference>
<dbReference type="GO" id="GO:0006094">
    <property type="term" value="P:gluconeogenesis"/>
    <property type="evidence" value="ECO:0007669"/>
    <property type="project" value="InterPro"/>
</dbReference>
<dbReference type="GO" id="GO:0006071">
    <property type="term" value="P:glycerol metabolic process"/>
    <property type="evidence" value="ECO:0007669"/>
    <property type="project" value="InterPro"/>
</dbReference>
<dbReference type="GO" id="GO:0019253">
    <property type="term" value="P:reductive pentose-phosphate cycle"/>
    <property type="evidence" value="ECO:0007669"/>
    <property type="project" value="UniProtKB-UniPathway"/>
</dbReference>
<dbReference type="CDD" id="cd01516">
    <property type="entry name" value="FBPase_glpX"/>
    <property type="match status" value="1"/>
</dbReference>
<dbReference type="FunFam" id="3.40.190.90:FF:000001">
    <property type="entry name" value="Fructose-1,6-bisphosphatase"/>
    <property type="match status" value="1"/>
</dbReference>
<dbReference type="Gene3D" id="3.40.190.90">
    <property type="match status" value="1"/>
</dbReference>
<dbReference type="Gene3D" id="3.30.540.10">
    <property type="entry name" value="Fructose-1,6-Bisphosphatase, subunit A, domain 1"/>
    <property type="match status" value="1"/>
</dbReference>
<dbReference type="InterPro" id="IPR004464">
    <property type="entry name" value="FBPase_class-2/SBPase"/>
</dbReference>
<dbReference type="NCBIfam" id="TIGR00330">
    <property type="entry name" value="glpX"/>
    <property type="match status" value="1"/>
</dbReference>
<dbReference type="PANTHER" id="PTHR30447:SF0">
    <property type="entry name" value="FRUCTOSE-1,6-BISPHOSPHATASE 1 CLASS 2-RELATED"/>
    <property type="match status" value="1"/>
</dbReference>
<dbReference type="PANTHER" id="PTHR30447">
    <property type="entry name" value="FRUCTOSE-1,6-BISPHOSPHATASE CLASS 2"/>
    <property type="match status" value="1"/>
</dbReference>
<dbReference type="Pfam" id="PF03320">
    <property type="entry name" value="FBPase_glpX"/>
    <property type="match status" value="1"/>
</dbReference>
<dbReference type="PIRSF" id="PIRSF004532">
    <property type="entry name" value="GlpX"/>
    <property type="match status" value="1"/>
</dbReference>
<dbReference type="SUPFAM" id="SSF56655">
    <property type="entry name" value="Carbohydrate phosphatase"/>
    <property type="match status" value="1"/>
</dbReference>